<dbReference type="EMBL" id="AF522117">
    <property type="protein sequence ID" value="AAM82109.1"/>
    <property type="molecule type" value="Genomic_DNA"/>
</dbReference>
<dbReference type="GO" id="GO:0009507">
    <property type="term" value="C:chloroplast"/>
    <property type="evidence" value="ECO:0007669"/>
    <property type="project" value="UniProtKB-SubCell"/>
</dbReference>
<dbReference type="GO" id="GO:0003723">
    <property type="term" value="F:RNA binding"/>
    <property type="evidence" value="ECO:0007669"/>
    <property type="project" value="UniProtKB-KW"/>
</dbReference>
<dbReference type="GO" id="GO:0006397">
    <property type="term" value="P:mRNA processing"/>
    <property type="evidence" value="ECO:0007669"/>
    <property type="project" value="UniProtKB-KW"/>
</dbReference>
<dbReference type="GO" id="GO:0008380">
    <property type="term" value="P:RNA splicing"/>
    <property type="evidence" value="ECO:0007669"/>
    <property type="project" value="UniProtKB-UniRule"/>
</dbReference>
<dbReference type="GO" id="GO:0008033">
    <property type="term" value="P:tRNA processing"/>
    <property type="evidence" value="ECO:0007669"/>
    <property type="project" value="UniProtKB-KW"/>
</dbReference>
<dbReference type="HAMAP" id="MF_01390">
    <property type="entry name" value="MatK"/>
    <property type="match status" value="1"/>
</dbReference>
<dbReference type="InterPro" id="IPR024937">
    <property type="entry name" value="Domain_X"/>
</dbReference>
<dbReference type="InterPro" id="IPR002866">
    <property type="entry name" value="Maturase_MatK"/>
</dbReference>
<dbReference type="InterPro" id="IPR024942">
    <property type="entry name" value="Maturase_MatK_N"/>
</dbReference>
<dbReference type="PANTHER" id="PTHR34811">
    <property type="entry name" value="MATURASE K"/>
    <property type="match status" value="1"/>
</dbReference>
<dbReference type="PANTHER" id="PTHR34811:SF1">
    <property type="entry name" value="MATURASE K"/>
    <property type="match status" value="1"/>
</dbReference>
<dbReference type="Pfam" id="PF01348">
    <property type="entry name" value="Intron_maturas2"/>
    <property type="match status" value="1"/>
</dbReference>
<dbReference type="Pfam" id="PF01824">
    <property type="entry name" value="MatK_N"/>
    <property type="match status" value="1"/>
</dbReference>
<protein>
    <recommendedName>
        <fullName evidence="1">Maturase K</fullName>
    </recommendedName>
    <alternativeName>
        <fullName evidence="1">Intron maturase</fullName>
    </alternativeName>
</protein>
<keyword id="KW-0150">Chloroplast</keyword>
<keyword id="KW-0507">mRNA processing</keyword>
<keyword id="KW-0934">Plastid</keyword>
<keyword id="KW-0694">RNA-binding</keyword>
<keyword id="KW-0819">tRNA processing</keyword>
<accession>Q8MCN8</accession>
<name>MATK_TRIRS</name>
<feature type="chain" id="PRO_0000143752" description="Maturase K">
    <location>
        <begin position="1"/>
        <end position="506"/>
    </location>
</feature>
<geneLocation type="chloroplast"/>
<reference key="1">
    <citation type="book" date="2003" name="Advances in legume systematics - part 10">
        <title>Phylogenetic analyses of tribes Trifolieae and Vicieae based on sequences of the plastid gene matK (Papilionoideae: Leguminosae).</title>
        <editorList>
            <person name="Klitgaard B.B."/>
            <person name="Bruneau A."/>
        </editorList>
        <authorList>
            <person name="Steele K.P."/>
            <person name="Wojciechowski M.F."/>
        </authorList>
    </citation>
    <scope>NUCLEOTIDE SEQUENCE [GENOMIC DNA]</scope>
</reference>
<sequence length="506" mass="60922">MKEYRVYLERARSRQQDFLYPLIFREYIYGLAYSHNFNRSIFVENGGYDNKYSLLNVKRLITRMYQQNHLIISTNDSNKNPFLGYNKNFYSQIISEGFAIVVEIPFFLQLSSSLEEAEIIKSYKNVRSIHSIFPFLEDKFTYLNYVSDIRIPYPIHLEILVQILRYWVKDVPLFHLLRLFLYDFCNWNCFTPTKKSISTFSKSNPRLFLFLYNFYVCEYESIFLFLRNKSSHLRLKSFSVFFERIFFYAKREHLVEVFSKDFSYTLPFFKDPNIHYVRYQGKCILASKNVPFLMNKWKHYFIHLWQCFFDVWSQPRTIDINQLSEHSFQLLGYFSNVRLNRSVVRSQMLENTFLIEIVSKKLDIIVPIIPLIRSLAKAKFCNVLGHPISKPVWADSSDFDIIERFLRICRNLSHYYNGSSKKKSLYRIKYILRLSCIKTLACKHKSTVRAFLKRSGSEELLEEFFTEEEEILSLIFPRDSFTLHRFHRNRIWYLDILFSNDLVNDE</sequence>
<gene>
    <name evidence="1" type="primary">matK</name>
</gene>
<comment type="function">
    <text evidence="1">Usually encoded in the trnK tRNA gene intron. Probably assists in splicing its own and other chloroplast group II introns.</text>
</comment>
<comment type="subcellular location">
    <subcellularLocation>
        <location>Plastid</location>
        <location>Chloroplast</location>
    </subcellularLocation>
</comment>
<comment type="similarity">
    <text evidence="1">Belongs to the intron maturase 2 family. MatK subfamily.</text>
</comment>
<evidence type="ECO:0000255" key="1">
    <source>
        <dbReference type="HAMAP-Rule" id="MF_01390"/>
    </source>
</evidence>
<proteinExistence type="inferred from homology"/>
<organism>
    <name type="scientific">Trifolium resupinatum</name>
    <name type="common">Persian clover</name>
    <dbReference type="NCBI Taxonomy" id="97036"/>
    <lineage>
        <taxon>Eukaryota</taxon>
        <taxon>Viridiplantae</taxon>
        <taxon>Streptophyta</taxon>
        <taxon>Embryophyta</taxon>
        <taxon>Tracheophyta</taxon>
        <taxon>Spermatophyta</taxon>
        <taxon>Magnoliopsida</taxon>
        <taxon>eudicotyledons</taxon>
        <taxon>Gunneridae</taxon>
        <taxon>Pentapetalae</taxon>
        <taxon>rosids</taxon>
        <taxon>fabids</taxon>
        <taxon>Fabales</taxon>
        <taxon>Fabaceae</taxon>
        <taxon>Papilionoideae</taxon>
        <taxon>50 kb inversion clade</taxon>
        <taxon>NPAAA clade</taxon>
        <taxon>Hologalegina</taxon>
        <taxon>IRL clade</taxon>
        <taxon>Trifolieae</taxon>
        <taxon>Trifolium</taxon>
    </lineage>
</organism>